<reference key="1">
    <citation type="journal article" date="2004" name="Proc. Natl. Acad. Sci. U.S.A.">
        <title>Genomic analysis of Bacteroides fragilis reveals extensive DNA inversions regulating cell surface adaptation.</title>
        <authorList>
            <person name="Kuwahara T."/>
            <person name="Yamashita A."/>
            <person name="Hirakawa H."/>
            <person name="Nakayama H."/>
            <person name="Toh H."/>
            <person name="Okada N."/>
            <person name="Kuhara S."/>
            <person name="Hattori M."/>
            <person name="Hayashi T."/>
            <person name="Ohnishi Y."/>
        </authorList>
    </citation>
    <scope>NUCLEOTIDE SEQUENCE [LARGE SCALE GENOMIC DNA]</scope>
    <source>
        <strain>YCH46</strain>
    </source>
</reference>
<proteinExistence type="inferred from homology"/>
<organism>
    <name type="scientific">Bacteroides fragilis (strain YCH46)</name>
    <dbReference type="NCBI Taxonomy" id="295405"/>
    <lineage>
        <taxon>Bacteria</taxon>
        <taxon>Pseudomonadati</taxon>
        <taxon>Bacteroidota</taxon>
        <taxon>Bacteroidia</taxon>
        <taxon>Bacteroidales</taxon>
        <taxon>Bacteroidaceae</taxon>
        <taxon>Bacteroides</taxon>
    </lineage>
</organism>
<gene>
    <name evidence="1" type="primary">ispG</name>
    <name type="ordered locus">BF4365</name>
</gene>
<dbReference type="EC" id="1.17.7.3" evidence="1"/>
<dbReference type="EMBL" id="AP006841">
    <property type="protein sequence ID" value="BAD51103.1"/>
    <property type="molecule type" value="Genomic_DNA"/>
</dbReference>
<dbReference type="RefSeq" id="WP_011203674.1">
    <property type="nucleotide sequence ID" value="NC_006347.1"/>
</dbReference>
<dbReference type="RefSeq" id="YP_101637.1">
    <property type="nucleotide sequence ID" value="NC_006347.1"/>
</dbReference>
<dbReference type="SMR" id="Q64N34"/>
<dbReference type="STRING" id="295405.BF4365"/>
<dbReference type="KEGG" id="bfr:BF4365"/>
<dbReference type="PATRIC" id="fig|295405.11.peg.4206"/>
<dbReference type="HOGENOM" id="CLU_012689_0_0_10"/>
<dbReference type="OrthoDB" id="9803214at2"/>
<dbReference type="UniPathway" id="UPA00056">
    <property type="reaction ID" value="UER00096"/>
</dbReference>
<dbReference type="Proteomes" id="UP000002197">
    <property type="component" value="Chromosome"/>
</dbReference>
<dbReference type="GO" id="GO:0051539">
    <property type="term" value="F:4 iron, 4 sulfur cluster binding"/>
    <property type="evidence" value="ECO:0007669"/>
    <property type="project" value="UniProtKB-UniRule"/>
</dbReference>
<dbReference type="GO" id="GO:0046429">
    <property type="term" value="F:4-hydroxy-3-methylbut-2-en-1-yl diphosphate synthase activity (ferredoxin)"/>
    <property type="evidence" value="ECO:0007669"/>
    <property type="project" value="UniProtKB-UniRule"/>
</dbReference>
<dbReference type="GO" id="GO:0141197">
    <property type="term" value="F:4-hydroxy-3-methylbut-2-enyl-diphosphate synthase activity (flavodoxin)"/>
    <property type="evidence" value="ECO:0007669"/>
    <property type="project" value="UniProtKB-EC"/>
</dbReference>
<dbReference type="GO" id="GO:0005506">
    <property type="term" value="F:iron ion binding"/>
    <property type="evidence" value="ECO:0007669"/>
    <property type="project" value="InterPro"/>
</dbReference>
<dbReference type="GO" id="GO:0019288">
    <property type="term" value="P:isopentenyl diphosphate biosynthetic process, methylerythritol 4-phosphate pathway"/>
    <property type="evidence" value="ECO:0007669"/>
    <property type="project" value="UniProtKB-UniRule"/>
</dbReference>
<dbReference type="GO" id="GO:0016114">
    <property type="term" value="P:terpenoid biosynthetic process"/>
    <property type="evidence" value="ECO:0007669"/>
    <property type="project" value="InterPro"/>
</dbReference>
<dbReference type="FunFam" id="3.20.20.20:FF:000005">
    <property type="entry name" value="4-hydroxy-3-methylbut-2-en-1-yl diphosphate synthase (flavodoxin)"/>
    <property type="match status" value="1"/>
</dbReference>
<dbReference type="FunFam" id="3.30.413.10:FF:000006">
    <property type="entry name" value="4-hydroxy-3-methylbut-2-en-1-yl diphosphate synthase (flavodoxin)"/>
    <property type="match status" value="1"/>
</dbReference>
<dbReference type="Gene3D" id="3.20.20.20">
    <property type="entry name" value="Dihydropteroate synthase-like"/>
    <property type="match status" value="1"/>
</dbReference>
<dbReference type="Gene3D" id="3.30.413.10">
    <property type="entry name" value="Sulfite Reductase Hemoprotein, domain 1"/>
    <property type="match status" value="1"/>
</dbReference>
<dbReference type="HAMAP" id="MF_00159">
    <property type="entry name" value="IspG"/>
    <property type="match status" value="1"/>
</dbReference>
<dbReference type="InterPro" id="IPR011005">
    <property type="entry name" value="Dihydropteroate_synth-like_sf"/>
</dbReference>
<dbReference type="InterPro" id="IPR017178">
    <property type="entry name" value="IspG_atypical"/>
</dbReference>
<dbReference type="InterPro" id="IPR004588">
    <property type="entry name" value="IspG_bac-typ"/>
</dbReference>
<dbReference type="InterPro" id="IPR045854">
    <property type="entry name" value="NO2/SO3_Rdtase_4Fe4S_sf"/>
</dbReference>
<dbReference type="NCBIfam" id="TIGR00612">
    <property type="entry name" value="ispG_gcpE"/>
    <property type="match status" value="1"/>
</dbReference>
<dbReference type="NCBIfam" id="NF002534">
    <property type="entry name" value="PRK02048.1"/>
    <property type="match status" value="1"/>
</dbReference>
<dbReference type="PANTHER" id="PTHR30454">
    <property type="entry name" value="4-HYDROXY-3-METHYLBUT-2-EN-1-YL DIPHOSPHATE SYNTHASE"/>
    <property type="match status" value="1"/>
</dbReference>
<dbReference type="PANTHER" id="PTHR30454:SF0">
    <property type="entry name" value="4-HYDROXY-3-METHYLBUT-2-EN-1-YL DIPHOSPHATE SYNTHASE (FERREDOXIN), CHLOROPLASTIC"/>
    <property type="match status" value="1"/>
</dbReference>
<dbReference type="Pfam" id="PF04551">
    <property type="entry name" value="GcpE"/>
    <property type="match status" value="2"/>
</dbReference>
<dbReference type="PIRSF" id="PIRSF037336">
    <property type="entry name" value="IspG_like"/>
    <property type="match status" value="1"/>
</dbReference>
<dbReference type="SUPFAM" id="SSF56014">
    <property type="entry name" value="Nitrite and sulphite reductase 4Fe-4S domain-like"/>
    <property type="match status" value="1"/>
</dbReference>
<keyword id="KW-0004">4Fe-4S</keyword>
<keyword id="KW-0408">Iron</keyword>
<keyword id="KW-0411">Iron-sulfur</keyword>
<keyword id="KW-0414">Isoprene biosynthesis</keyword>
<keyword id="KW-0479">Metal-binding</keyword>
<keyword id="KW-0560">Oxidoreductase</keyword>
<evidence type="ECO:0000255" key="1">
    <source>
        <dbReference type="HAMAP-Rule" id="MF_00159"/>
    </source>
</evidence>
<feature type="chain" id="PRO_0000190532" description="4-hydroxy-3-methylbut-2-en-1-yl diphosphate synthase (flavodoxin)">
    <location>
        <begin position="1"/>
        <end position="626"/>
    </location>
</feature>
<feature type="binding site" evidence="1">
    <location>
        <position position="521"/>
    </location>
    <ligand>
        <name>[4Fe-4S] cluster</name>
        <dbReference type="ChEBI" id="CHEBI:49883"/>
    </ligand>
</feature>
<feature type="binding site" evidence="1">
    <location>
        <position position="524"/>
    </location>
    <ligand>
        <name>[4Fe-4S] cluster</name>
        <dbReference type="ChEBI" id="CHEBI:49883"/>
    </ligand>
</feature>
<feature type="binding site" evidence="1">
    <location>
        <position position="555"/>
    </location>
    <ligand>
        <name>[4Fe-4S] cluster</name>
        <dbReference type="ChEBI" id="CHEBI:49883"/>
    </ligand>
</feature>
<feature type="binding site" evidence="1">
    <location>
        <position position="562"/>
    </location>
    <ligand>
        <name>[4Fe-4S] cluster</name>
        <dbReference type="ChEBI" id="CHEBI:49883"/>
    </ligand>
</feature>
<protein>
    <recommendedName>
        <fullName evidence="1">4-hydroxy-3-methylbut-2-en-1-yl diphosphate synthase (flavodoxin)</fullName>
        <ecNumber evidence="1">1.17.7.3</ecNumber>
    </recommendedName>
    <alternativeName>
        <fullName evidence="1">1-hydroxy-2-methyl-2-(E)-butenyl 4-diphosphate synthase</fullName>
    </alternativeName>
</protein>
<comment type="function">
    <text evidence="1">Converts 2C-methyl-D-erythritol 2,4-cyclodiphosphate (ME-2,4cPP) into 1-hydroxy-2-methyl-2-(E)-butenyl 4-diphosphate.</text>
</comment>
<comment type="catalytic activity">
    <reaction evidence="1">
        <text>(2E)-4-hydroxy-3-methylbut-2-enyl diphosphate + oxidized [flavodoxin] + H2O + 2 H(+) = 2-C-methyl-D-erythritol 2,4-cyclic diphosphate + reduced [flavodoxin]</text>
        <dbReference type="Rhea" id="RHEA:43604"/>
        <dbReference type="Rhea" id="RHEA-COMP:10622"/>
        <dbReference type="Rhea" id="RHEA-COMP:10623"/>
        <dbReference type="ChEBI" id="CHEBI:15377"/>
        <dbReference type="ChEBI" id="CHEBI:15378"/>
        <dbReference type="ChEBI" id="CHEBI:57618"/>
        <dbReference type="ChEBI" id="CHEBI:58210"/>
        <dbReference type="ChEBI" id="CHEBI:58483"/>
        <dbReference type="ChEBI" id="CHEBI:128753"/>
        <dbReference type="EC" id="1.17.7.3"/>
    </reaction>
</comment>
<comment type="cofactor">
    <cofactor evidence="1">
        <name>[4Fe-4S] cluster</name>
        <dbReference type="ChEBI" id="CHEBI:49883"/>
    </cofactor>
    <text evidence="1">Binds 1 [4Fe-4S] cluster.</text>
</comment>
<comment type="pathway">
    <text evidence="1">Isoprenoid biosynthesis; isopentenyl diphosphate biosynthesis via DXP pathway; isopentenyl diphosphate from 1-deoxy-D-xylulose 5-phosphate: step 5/6.</text>
</comment>
<comment type="similarity">
    <text evidence="1">Belongs to the IspG family.</text>
</comment>
<sequence length="626" mass="69143">MDLFNYSRRETSEVNIGAVPLGGPNPIRIQSMTNTPTQDTEACVAQAKRIVDAGGEYVRLTTQGVKEAENLMNINIGLRSTGYMVPLVADVHFSPKVADVAAQYAEKVRINPGNYVDPGRTFKQLEYTDEEYAAELQKIRDRFVPFLNICKENHTAVRIGVNHGSLSDRIMSRYGDTPEGMVESCMEFLRICVDEKFTDVVISIKASNTVVMVKTVRLLVSVMEQEGMSFPLHLGVTEAGDGEDGRIKSALGIGALLADGLGDTIRVSLSEEPEAEIPVARKLVDYITSRRNHPYIPGMEAPDFNYLSPVRRKTRPVRNIGGDHLPVVLADRMDGRMETHPQFTPDYIYAGRALPEQTEPGVQYILDADVWKGEPDTWPAFNYAQLELMETCAAELKFLFTPYMALTREVVACLKQHPEAVVVSQSNHPNRVGEHRALAHQLTVEGLQNPVIFFQHYAEDTAEDLQVKAGADMGALIFDGLCDGIYLFNQGKLSHAVIDATAFGILQAGRIRTSKTEYISCPGCGRTLFNLQSTIARVKEATSHLKGLKIGIMGCIVNGPGEMADADYGYVGAGRGKISLYKQKECIEKNIPEEEAVEKLIELIKANGDYEEKTSSLSSPKEKEDK</sequence>
<name>ISPG_BACFR</name>
<accession>Q64N34</accession>